<evidence type="ECO:0000250" key="1"/>
<evidence type="ECO:0000250" key="2">
    <source>
        <dbReference type="UniProtKB" id="P08590"/>
    </source>
</evidence>
<evidence type="ECO:0000250" key="3">
    <source>
        <dbReference type="UniProtKB" id="P09542"/>
    </source>
</evidence>
<evidence type="ECO:0000250" key="4">
    <source>
        <dbReference type="UniProtKB" id="P16409"/>
    </source>
</evidence>
<evidence type="ECO:0000255" key="5">
    <source>
        <dbReference type="PROSITE-ProRule" id="PRU00448"/>
    </source>
</evidence>
<evidence type="ECO:0000256" key="6">
    <source>
        <dbReference type="SAM" id="MobiDB-lite"/>
    </source>
</evidence>
<gene>
    <name evidence="2" type="primary">MYL3</name>
</gene>
<feature type="initiator methionine" description="Removed" evidence="3">
    <location>
        <position position="1"/>
    </location>
</feature>
<feature type="chain" id="PRO_0000240322" description="Myosin light chain 3">
    <location>
        <begin position="2"/>
        <end position="195"/>
    </location>
</feature>
<feature type="domain" description="EF-hand 1" evidence="5">
    <location>
        <begin position="49"/>
        <end position="86"/>
    </location>
</feature>
<feature type="domain" description="EF-hand 2" evidence="5">
    <location>
        <begin position="128"/>
        <end position="163"/>
    </location>
</feature>
<feature type="domain" description="EF-hand 3" evidence="5">
    <location>
        <begin position="163"/>
        <end position="195"/>
    </location>
</feature>
<feature type="region of interest" description="Disordered" evidence="6">
    <location>
        <begin position="1"/>
        <end position="37"/>
    </location>
</feature>
<feature type="compositionally biased region" description="Basic and acidic residues" evidence="6">
    <location>
        <begin position="1"/>
        <end position="15"/>
    </location>
</feature>
<feature type="compositionally biased region" description="Basic and acidic residues" evidence="6">
    <location>
        <begin position="28"/>
        <end position="37"/>
    </location>
</feature>
<feature type="modified residue" description="N,N,N-trimethylalanine" evidence="3">
    <location>
        <position position="2"/>
    </location>
</feature>
<feature type="modified residue" description="Phosphothreonine" evidence="4">
    <location>
        <position position="88"/>
    </location>
</feature>
<feature type="modified residue" description="Phosphothreonine" evidence="3">
    <location>
        <position position="127"/>
    </location>
</feature>
<feature type="modified residue" description="Phosphothreonine" evidence="4">
    <location>
        <position position="129"/>
    </location>
</feature>
<feature type="modified residue" description="Phosphotyrosine" evidence="4">
    <location>
        <position position="130"/>
    </location>
</feature>
<feature type="modified residue" description="Phosphoserine" evidence="3">
    <location>
        <position position="179"/>
    </location>
</feature>
<dbReference type="EMBL" id="CR859867">
    <property type="protein sequence ID" value="CAH92023.1"/>
    <property type="molecule type" value="mRNA"/>
</dbReference>
<dbReference type="RefSeq" id="NP_001127497.1">
    <property type="nucleotide sequence ID" value="NM_001134025.1"/>
</dbReference>
<dbReference type="RefSeq" id="XP_009237357.1">
    <property type="nucleotide sequence ID" value="XM_009239082.2"/>
</dbReference>
<dbReference type="RefSeq" id="XP_054406444.1">
    <property type="nucleotide sequence ID" value="XM_054550469.2"/>
</dbReference>
<dbReference type="RefSeq" id="XP_054406445.1">
    <property type="nucleotide sequence ID" value="XM_054550470.1"/>
</dbReference>
<dbReference type="RefSeq" id="XP_054406446.1">
    <property type="nucleotide sequence ID" value="XM_054550471.2"/>
</dbReference>
<dbReference type="RefSeq" id="XP_054406447.1">
    <property type="nucleotide sequence ID" value="XM_054550472.2"/>
</dbReference>
<dbReference type="RefSeq" id="XP_054406448.1">
    <property type="nucleotide sequence ID" value="XM_054550473.2"/>
</dbReference>
<dbReference type="SMR" id="Q5R887"/>
<dbReference type="FunCoup" id="Q5R887">
    <property type="interactions" value="351"/>
</dbReference>
<dbReference type="STRING" id="9601.ENSPPYP00000015580"/>
<dbReference type="Ensembl" id="ENSPPYT00000016200.2">
    <property type="protein sequence ID" value="ENSPPYP00000015580.1"/>
    <property type="gene ID" value="ENSPPYG00000013927.2"/>
</dbReference>
<dbReference type="GeneID" id="100174572"/>
<dbReference type="KEGG" id="pon:100174572"/>
<dbReference type="CTD" id="4634"/>
<dbReference type="eggNOG" id="KOG0030">
    <property type="taxonomic scope" value="Eukaryota"/>
</dbReference>
<dbReference type="GeneTree" id="ENSGT01030000234570"/>
<dbReference type="HOGENOM" id="CLU_061288_13_0_1"/>
<dbReference type="InParanoid" id="Q5R887"/>
<dbReference type="OMA" id="YDRTPKC"/>
<dbReference type="OrthoDB" id="5959761at2759"/>
<dbReference type="TreeFam" id="TF351553"/>
<dbReference type="Proteomes" id="UP000001595">
    <property type="component" value="Chromosome 3"/>
</dbReference>
<dbReference type="GO" id="GO:0031672">
    <property type="term" value="C:A band"/>
    <property type="evidence" value="ECO:0007669"/>
    <property type="project" value="Ensembl"/>
</dbReference>
<dbReference type="GO" id="GO:0031674">
    <property type="term" value="C:I band"/>
    <property type="evidence" value="ECO:0007669"/>
    <property type="project" value="Ensembl"/>
</dbReference>
<dbReference type="GO" id="GO:0016460">
    <property type="term" value="C:myosin II complex"/>
    <property type="evidence" value="ECO:0007669"/>
    <property type="project" value="TreeGrafter"/>
</dbReference>
<dbReference type="GO" id="GO:0003785">
    <property type="term" value="F:actin monomer binding"/>
    <property type="evidence" value="ECO:0007669"/>
    <property type="project" value="Ensembl"/>
</dbReference>
<dbReference type="GO" id="GO:0005509">
    <property type="term" value="F:calcium ion binding"/>
    <property type="evidence" value="ECO:0007669"/>
    <property type="project" value="InterPro"/>
</dbReference>
<dbReference type="GO" id="GO:0060048">
    <property type="term" value="P:cardiac muscle contraction"/>
    <property type="evidence" value="ECO:0007669"/>
    <property type="project" value="Ensembl"/>
</dbReference>
<dbReference type="GO" id="GO:0006942">
    <property type="term" value="P:regulation of striated muscle contraction"/>
    <property type="evidence" value="ECO:0007669"/>
    <property type="project" value="Ensembl"/>
</dbReference>
<dbReference type="GO" id="GO:0002026">
    <property type="term" value="P:regulation of the force of heart contraction"/>
    <property type="evidence" value="ECO:0007669"/>
    <property type="project" value="Ensembl"/>
</dbReference>
<dbReference type="GO" id="GO:0055010">
    <property type="term" value="P:ventricular cardiac muscle tissue morphogenesis"/>
    <property type="evidence" value="ECO:0007669"/>
    <property type="project" value="Ensembl"/>
</dbReference>
<dbReference type="CDD" id="cd00051">
    <property type="entry name" value="EFh"/>
    <property type="match status" value="1"/>
</dbReference>
<dbReference type="FunFam" id="1.10.238.10:FF:000019">
    <property type="entry name" value="Myosin light chain 1 skeletal"/>
    <property type="match status" value="1"/>
</dbReference>
<dbReference type="FunFam" id="1.10.238.10:FF:000056">
    <property type="entry name" value="Myosin light chain 1 skeletal"/>
    <property type="match status" value="1"/>
</dbReference>
<dbReference type="Gene3D" id="1.10.238.10">
    <property type="entry name" value="EF-hand"/>
    <property type="match status" value="2"/>
</dbReference>
<dbReference type="InterPro" id="IPR050230">
    <property type="entry name" value="CALM/Myosin/TropC-like"/>
</dbReference>
<dbReference type="InterPro" id="IPR011992">
    <property type="entry name" value="EF-hand-dom_pair"/>
</dbReference>
<dbReference type="InterPro" id="IPR002048">
    <property type="entry name" value="EF_hand_dom"/>
</dbReference>
<dbReference type="PANTHER" id="PTHR23048">
    <property type="entry name" value="MYOSIN LIGHT CHAIN 1, 3"/>
    <property type="match status" value="1"/>
</dbReference>
<dbReference type="PANTHER" id="PTHR23048:SF2">
    <property type="entry name" value="MYOSIN LIGHT CHAIN 3"/>
    <property type="match status" value="1"/>
</dbReference>
<dbReference type="SUPFAM" id="SSF47473">
    <property type="entry name" value="EF-hand"/>
    <property type="match status" value="1"/>
</dbReference>
<dbReference type="PROSITE" id="PS50222">
    <property type="entry name" value="EF_HAND_2"/>
    <property type="match status" value="3"/>
</dbReference>
<organism>
    <name type="scientific">Pongo abelii</name>
    <name type="common">Sumatran orangutan</name>
    <name type="synonym">Pongo pygmaeus abelii</name>
    <dbReference type="NCBI Taxonomy" id="9601"/>
    <lineage>
        <taxon>Eukaryota</taxon>
        <taxon>Metazoa</taxon>
        <taxon>Chordata</taxon>
        <taxon>Craniata</taxon>
        <taxon>Vertebrata</taxon>
        <taxon>Euteleostomi</taxon>
        <taxon>Mammalia</taxon>
        <taxon>Eutheria</taxon>
        <taxon>Euarchontoglires</taxon>
        <taxon>Primates</taxon>
        <taxon>Haplorrhini</taxon>
        <taxon>Catarrhini</taxon>
        <taxon>Hominidae</taxon>
        <taxon>Pongo</taxon>
    </lineage>
</organism>
<comment type="function">
    <text evidence="1">Regulatory light chain of myosin. Does not bind calcium (By similarity).</text>
</comment>
<comment type="subunit">
    <text evidence="1">Myosin is a hexamer of 2 heavy chains and 4 light chains.</text>
</comment>
<comment type="PTM">
    <text evidence="1">N-terminus is methylated by METTL11A/NTM1.</text>
</comment>
<accession>Q5R887</accession>
<keyword id="KW-0488">Methylation</keyword>
<keyword id="KW-0505">Motor protein</keyword>
<keyword id="KW-0514">Muscle protein</keyword>
<keyword id="KW-0518">Myosin</keyword>
<keyword id="KW-0597">Phosphoprotein</keyword>
<keyword id="KW-1185">Reference proteome</keyword>
<keyword id="KW-0677">Repeat</keyword>
<protein>
    <recommendedName>
        <fullName>Myosin light chain 3</fullName>
    </recommendedName>
    <alternativeName>
        <fullName>Myosin light chain 1, slow-twitch muscle B/ventricular isoform</fullName>
        <shortName evidence="2">MLC1SB</shortName>
    </alternativeName>
</protein>
<sequence>MAPKKPEPKKDDAKAAPKAAPAPAPPPEPERPKEVEFDASKIKIEFTPEQIEEFKEAFMLFDRTPKCEMKITYGQCGDVLRALGQNPTQAEVLRVLGKPRQEELNTKMMDFETFLPMLQHISKNKDTGTYEDFVEGLRVFDKEGNGTVMGAELRHVLATLGERLTEDEVEKLMAGQEDSNGCINYEAFVKHIMSS</sequence>
<proteinExistence type="evidence at transcript level"/>
<reference key="1">
    <citation type="submission" date="2004-11" db="EMBL/GenBank/DDBJ databases">
        <authorList>
            <consortium name="The German cDNA consortium"/>
        </authorList>
    </citation>
    <scope>NUCLEOTIDE SEQUENCE [LARGE SCALE MRNA]</scope>
    <source>
        <tissue>Heart</tissue>
    </source>
</reference>
<name>MYL3_PONAB</name>